<comment type="function">
    <text evidence="2">Cell wall formation.</text>
</comment>
<comment type="catalytic activity">
    <reaction evidence="2">
        <text>2 D-alanine + ATP = D-alanyl-D-alanine + ADP + phosphate + H(+)</text>
        <dbReference type="Rhea" id="RHEA:11224"/>
        <dbReference type="ChEBI" id="CHEBI:15378"/>
        <dbReference type="ChEBI" id="CHEBI:30616"/>
        <dbReference type="ChEBI" id="CHEBI:43474"/>
        <dbReference type="ChEBI" id="CHEBI:57416"/>
        <dbReference type="ChEBI" id="CHEBI:57822"/>
        <dbReference type="ChEBI" id="CHEBI:456216"/>
        <dbReference type="EC" id="6.3.2.4"/>
    </reaction>
</comment>
<comment type="cofactor">
    <cofactor evidence="1">
        <name>Mg(2+)</name>
        <dbReference type="ChEBI" id="CHEBI:18420"/>
    </cofactor>
    <cofactor evidence="1">
        <name>Mn(2+)</name>
        <dbReference type="ChEBI" id="CHEBI:29035"/>
    </cofactor>
    <text evidence="1">Binds 2 magnesium or manganese ions per subunit.</text>
</comment>
<comment type="pathway">
    <text evidence="2">Cell wall biogenesis; peptidoglycan biosynthesis.</text>
</comment>
<comment type="subcellular location">
    <subcellularLocation>
        <location evidence="2">Cytoplasm</location>
    </subcellularLocation>
</comment>
<comment type="similarity">
    <text evidence="2">Belongs to the D-alanine--D-alanine ligase family.</text>
</comment>
<dbReference type="EC" id="6.3.2.4" evidence="2"/>
<dbReference type="EMBL" id="CP000114">
    <property type="protein sequence ID" value="ABA45511.1"/>
    <property type="molecule type" value="Genomic_DNA"/>
</dbReference>
<dbReference type="RefSeq" id="WP_000032513.1">
    <property type="nucleotide sequence ID" value="NC_007432.1"/>
</dbReference>
<dbReference type="SMR" id="Q3K1T9"/>
<dbReference type="KEGG" id="sak:SAK_0892"/>
<dbReference type="HOGENOM" id="CLU_039268_0_0_9"/>
<dbReference type="UniPathway" id="UPA00219"/>
<dbReference type="GO" id="GO:0005829">
    <property type="term" value="C:cytosol"/>
    <property type="evidence" value="ECO:0007669"/>
    <property type="project" value="TreeGrafter"/>
</dbReference>
<dbReference type="GO" id="GO:0005524">
    <property type="term" value="F:ATP binding"/>
    <property type="evidence" value="ECO:0007669"/>
    <property type="project" value="UniProtKB-KW"/>
</dbReference>
<dbReference type="GO" id="GO:0008716">
    <property type="term" value="F:D-alanine-D-alanine ligase activity"/>
    <property type="evidence" value="ECO:0007669"/>
    <property type="project" value="UniProtKB-UniRule"/>
</dbReference>
<dbReference type="GO" id="GO:0046872">
    <property type="term" value="F:metal ion binding"/>
    <property type="evidence" value="ECO:0007669"/>
    <property type="project" value="UniProtKB-KW"/>
</dbReference>
<dbReference type="GO" id="GO:0071555">
    <property type="term" value="P:cell wall organization"/>
    <property type="evidence" value="ECO:0007669"/>
    <property type="project" value="UniProtKB-KW"/>
</dbReference>
<dbReference type="GO" id="GO:0009252">
    <property type="term" value="P:peptidoglycan biosynthetic process"/>
    <property type="evidence" value="ECO:0007669"/>
    <property type="project" value="UniProtKB-UniRule"/>
</dbReference>
<dbReference type="GO" id="GO:0008360">
    <property type="term" value="P:regulation of cell shape"/>
    <property type="evidence" value="ECO:0007669"/>
    <property type="project" value="UniProtKB-KW"/>
</dbReference>
<dbReference type="FunFam" id="3.30.1490.20:FF:000007">
    <property type="entry name" value="D-alanine--D-alanine ligase"/>
    <property type="match status" value="1"/>
</dbReference>
<dbReference type="FunFam" id="3.30.470.20:FF:000008">
    <property type="entry name" value="D-alanine--D-alanine ligase"/>
    <property type="match status" value="1"/>
</dbReference>
<dbReference type="Gene3D" id="3.40.50.20">
    <property type="match status" value="1"/>
</dbReference>
<dbReference type="Gene3D" id="3.30.1490.20">
    <property type="entry name" value="ATP-grasp fold, A domain"/>
    <property type="match status" value="1"/>
</dbReference>
<dbReference type="Gene3D" id="3.30.470.20">
    <property type="entry name" value="ATP-grasp fold, B domain"/>
    <property type="match status" value="1"/>
</dbReference>
<dbReference type="HAMAP" id="MF_00047">
    <property type="entry name" value="Dala_Dala_lig"/>
    <property type="match status" value="1"/>
</dbReference>
<dbReference type="InterPro" id="IPR011761">
    <property type="entry name" value="ATP-grasp"/>
</dbReference>
<dbReference type="InterPro" id="IPR013815">
    <property type="entry name" value="ATP_grasp_subdomain_1"/>
</dbReference>
<dbReference type="InterPro" id="IPR000291">
    <property type="entry name" value="D-Ala_lig_Van_CS"/>
</dbReference>
<dbReference type="InterPro" id="IPR005905">
    <property type="entry name" value="D_ala_D_ala"/>
</dbReference>
<dbReference type="InterPro" id="IPR011095">
    <property type="entry name" value="Dala_Dala_lig_C"/>
</dbReference>
<dbReference type="InterPro" id="IPR011127">
    <property type="entry name" value="Dala_Dala_lig_N"/>
</dbReference>
<dbReference type="InterPro" id="IPR016185">
    <property type="entry name" value="PreATP-grasp_dom_sf"/>
</dbReference>
<dbReference type="NCBIfam" id="TIGR01205">
    <property type="entry name" value="D_ala_D_alaTIGR"/>
    <property type="match status" value="1"/>
</dbReference>
<dbReference type="NCBIfam" id="NF002528">
    <property type="entry name" value="PRK01966.1-4"/>
    <property type="match status" value="1"/>
</dbReference>
<dbReference type="NCBIfam" id="NF002529">
    <property type="entry name" value="PRK01966.1-5"/>
    <property type="match status" value="1"/>
</dbReference>
<dbReference type="PANTHER" id="PTHR23132">
    <property type="entry name" value="D-ALANINE--D-ALANINE LIGASE"/>
    <property type="match status" value="1"/>
</dbReference>
<dbReference type="PANTHER" id="PTHR23132:SF25">
    <property type="entry name" value="D-ALANINE--D-ALANINE LIGASE A"/>
    <property type="match status" value="1"/>
</dbReference>
<dbReference type="Pfam" id="PF07478">
    <property type="entry name" value="Dala_Dala_lig_C"/>
    <property type="match status" value="1"/>
</dbReference>
<dbReference type="Pfam" id="PF01820">
    <property type="entry name" value="Dala_Dala_lig_N"/>
    <property type="match status" value="1"/>
</dbReference>
<dbReference type="PIRSF" id="PIRSF039102">
    <property type="entry name" value="Ddl/VanB"/>
    <property type="match status" value="1"/>
</dbReference>
<dbReference type="SUPFAM" id="SSF56059">
    <property type="entry name" value="Glutathione synthetase ATP-binding domain-like"/>
    <property type="match status" value="1"/>
</dbReference>
<dbReference type="SUPFAM" id="SSF52440">
    <property type="entry name" value="PreATP-grasp domain"/>
    <property type="match status" value="1"/>
</dbReference>
<dbReference type="PROSITE" id="PS50975">
    <property type="entry name" value="ATP_GRASP"/>
    <property type="match status" value="1"/>
</dbReference>
<dbReference type="PROSITE" id="PS00843">
    <property type="entry name" value="DALA_DALA_LIGASE_1"/>
    <property type="match status" value="1"/>
</dbReference>
<dbReference type="PROSITE" id="PS00844">
    <property type="entry name" value="DALA_DALA_LIGASE_2"/>
    <property type="match status" value="1"/>
</dbReference>
<accession>Q3K1T9</accession>
<evidence type="ECO:0000250" key="1"/>
<evidence type="ECO:0000255" key="2">
    <source>
        <dbReference type="HAMAP-Rule" id="MF_00047"/>
    </source>
</evidence>
<keyword id="KW-0067">ATP-binding</keyword>
<keyword id="KW-0133">Cell shape</keyword>
<keyword id="KW-0961">Cell wall biogenesis/degradation</keyword>
<keyword id="KW-0963">Cytoplasm</keyword>
<keyword id="KW-0436">Ligase</keyword>
<keyword id="KW-0460">Magnesium</keyword>
<keyword id="KW-0464">Manganese</keyword>
<keyword id="KW-0479">Metal-binding</keyword>
<keyword id="KW-0547">Nucleotide-binding</keyword>
<keyword id="KW-0573">Peptidoglycan synthesis</keyword>
<proteinExistence type="inferred from homology"/>
<organism>
    <name type="scientific">Streptococcus agalactiae serotype Ia (strain ATCC 27591 / A909 / CDC SS700)</name>
    <dbReference type="NCBI Taxonomy" id="205921"/>
    <lineage>
        <taxon>Bacteria</taxon>
        <taxon>Bacillati</taxon>
        <taxon>Bacillota</taxon>
        <taxon>Bacilli</taxon>
        <taxon>Lactobacillales</taxon>
        <taxon>Streptococcaceae</taxon>
        <taxon>Streptococcus</taxon>
    </lineage>
</organism>
<gene>
    <name evidence="2" type="primary">ddl</name>
    <name type="ordered locus">SAK_0892</name>
</gene>
<name>DDL_STRA1</name>
<reference key="1">
    <citation type="journal article" date="2005" name="Proc. Natl. Acad. Sci. U.S.A.">
        <title>Genome analysis of multiple pathogenic isolates of Streptococcus agalactiae: implications for the microbial 'pan-genome'.</title>
        <authorList>
            <person name="Tettelin H."/>
            <person name="Masignani V."/>
            <person name="Cieslewicz M.J."/>
            <person name="Donati C."/>
            <person name="Medini D."/>
            <person name="Ward N.L."/>
            <person name="Angiuoli S.V."/>
            <person name="Crabtree J."/>
            <person name="Jones A.L."/>
            <person name="Durkin A.S."/>
            <person name="DeBoy R.T."/>
            <person name="Davidsen T.M."/>
            <person name="Mora M."/>
            <person name="Scarselli M."/>
            <person name="Margarit y Ros I."/>
            <person name="Peterson J.D."/>
            <person name="Hauser C.R."/>
            <person name="Sundaram J.P."/>
            <person name="Nelson W.C."/>
            <person name="Madupu R."/>
            <person name="Brinkac L.M."/>
            <person name="Dodson R.J."/>
            <person name="Rosovitz M.J."/>
            <person name="Sullivan S.A."/>
            <person name="Daugherty S.C."/>
            <person name="Haft D.H."/>
            <person name="Selengut J."/>
            <person name="Gwinn M.L."/>
            <person name="Zhou L."/>
            <person name="Zafar N."/>
            <person name="Khouri H."/>
            <person name="Radune D."/>
            <person name="Dimitrov G."/>
            <person name="Watkins K."/>
            <person name="O'Connor K.J."/>
            <person name="Smith S."/>
            <person name="Utterback T.R."/>
            <person name="White O."/>
            <person name="Rubens C.E."/>
            <person name="Grandi G."/>
            <person name="Madoff L.C."/>
            <person name="Kasper D.L."/>
            <person name="Telford J.L."/>
            <person name="Wessels M.R."/>
            <person name="Rappuoli R."/>
            <person name="Fraser C.M."/>
        </authorList>
    </citation>
    <scope>NUCLEOTIDE SEQUENCE [LARGE SCALE GENOMIC DNA]</scope>
    <source>
        <strain>ATCC 27591 / A909 / CDC SS700</strain>
    </source>
</reference>
<protein>
    <recommendedName>
        <fullName evidence="2">D-alanine--D-alanine ligase</fullName>
        <ecNumber evidence="2">6.3.2.4</ecNumber>
    </recommendedName>
    <alternativeName>
        <fullName evidence="2">D-Ala-D-Ala ligase</fullName>
    </alternativeName>
    <alternativeName>
        <fullName evidence="2">D-alanylalanine synthetase</fullName>
    </alternativeName>
</protein>
<sequence length="348" mass="39068">MSKETLILLYGGRSAEREVSVLSAESVMRAINYDKFFVKTYFITQVGQFIKTQEFDEMPSSDEKLMTNQTVDLDKMVRPSDIYDDNAIVFPVLHGPMGEDGSIQGFLEVLRMPYVGTNILSSSVAMDKITTKQVLATVGVPQVAYQTYFEGDDLEHAIKLSLETLSFPIFVKPANMGSSVGISKATDESSLRSAIDLALKYDSRILIEQGVTAREIEVGILGNNDVKTTFPGEVVKDVDFYDYDAKYIDNKITMDIPAKVDEATMEAMRQYASKAFKAIGACGLSRCDFFLTKDGQIFLNELNTMPGFTQWSMYPLLWENMGLTYSDLIEKLVMLAKEMFEKRESHLI</sequence>
<feature type="chain" id="PRO_1000030498" description="D-alanine--D-alanine ligase">
    <location>
        <begin position="1"/>
        <end position="348"/>
    </location>
</feature>
<feature type="domain" description="ATP-grasp" evidence="2">
    <location>
        <begin position="132"/>
        <end position="334"/>
    </location>
</feature>
<feature type="binding site" evidence="2">
    <location>
        <begin position="162"/>
        <end position="217"/>
    </location>
    <ligand>
        <name>ATP</name>
        <dbReference type="ChEBI" id="CHEBI:30616"/>
    </ligand>
</feature>
<feature type="binding site" evidence="2">
    <location>
        <position position="288"/>
    </location>
    <ligand>
        <name>Mg(2+)</name>
        <dbReference type="ChEBI" id="CHEBI:18420"/>
        <label>1</label>
    </ligand>
</feature>
<feature type="binding site" evidence="2">
    <location>
        <position position="301"/>
    </location>
    <ligand>
        <name>Mg(2+)</name>
        <dbReference type="ChEBI" id="CHEBI:18420"/>
        <label>1</label>
    </ligand>
</feature>
<feature type="binding site" evidence="2">
    <location>
        <position position="301"/>
    </location>
    <ligand>
        <name>Mg(2+)</name>
        <dbReference type="ChEBI" id="CHEBI:18420"/>
        <label>2</label>
    </ligand>
</feature>
<feature type="binding site" evidence="2">
    <location>
        <position position="303"/>
    </location>
    <ligand>
        <name>Mg(2+)</name>
        <dbReference type="ChEBI" id="CHEBI:18420"/>
        <label>2</label>
    </ligand>
</feature>